<dbReference type="EMBL" id="CR858662">
    <property type="protein sequence ID" value="CAH90875.1"/>
    <property type="molecule type" value="mRNA"/>
</dbReference>
<dbReference type="RefSeq" id="NP_001125500.1">
    <property type="nucleotide sequence ID" value="NM_001132028.1"/>
</dbReference>
<dbReference type="SMR" id="Q5RBI5"/>
<dbReference type="FunCoup" id="Q5RBI5">
    <property type="interactions" value="3746"/>
</dbReference>
<dbReference type="STRING" id="9601.ENSPPYP00000008511"/>
<dbReference type="GeneID" id="100172409"/>
<dbReference type="KEGG" id="pon:100172409"/>
<dbReference type="CTD" id="23450"/>
<dbReference type="eggNOG" id="KOG1898">
    <property type="taxonomic scope" value="Eukaryota"/>
</dbReference>
<dbReference type="InParanoid" id="Q5RBI5"/>
<dbReference type="OrthoDB" id="436637at2759"/>
<dbReference type="Proteomes" id="UP000001595">
    <property type="component" value="Unplaced"/>
</dbReference>
<dbReference type="GO" id="GO:0005634">
    <property type="term" value="C:nucleus"/>
    <property type="evidence" value="ECO:0000250"/>
    <property type="project" value="UniProtKB"/>
</dbReference>
<dbReference type="GO" id="GO:0071005">
    <property type="term" value="C:U2-type precatalytic spliceosome"/>
    <property type="evidence" value="ECO:0000250"/>
    <property type="project" value="UniProtKB"/>
</dbReference>
<dbReference type="GO" id="GO:0005684">
    <property type="term" value="C:U2-type spliceosomal complex"/>
    <property type="evidence" value="ECO:0000250"/>
    <property type="project" value="UniProtKB"/>
</dbReference>
<dbReference type="GO" id="GO:0003676">
    <property type="term" value="F:nucleic acid binding"/>
    <property type="evidence" value="ECO:0007669"/>
    <property type="project" value="InterPro"/>
</dbReference>
<dbReference type="GO" id="GO:0000398">
    <property type="term" value="P:mRNA splicing, via spliceosome"/>
    <property type="evidence" value="ECO:0000250"/>
    <property type="project" value="UniProtKB"/>
</dbReference>
<dbReference type="FunFam" id="2.130.10.10:FF:001721">
    <property type="entry name" value="Spliceosomal protein sap, putative"/>
    <property type="match status" value="1"/>
</dbReference>
<dbReference type="FunFam" id="1.10.150.910:FF:000002">
    <property type="entry name" value="Splicing factor 3B subunit 3"/>
    <property type="match status" value="1"/>
</dbReference>
<dbReference type="FunFam" id="2.130.10.10:FF:000027">
    <property type="entry name" value="Splicing factor 3B subunit 3"/>
    <property type="match status" value="1"/>
</dbReference>
<dbReference type="FunFam" id="2.130.10.10:FF:000041">
    <property type="entry name" value="Splicing factor 3b subunit 3"/>
    <property type="match status" value="1"/>
</dbReference>
<dbReference type="Gene3D" id="1.10.150.910">
    <property type="match status" value="1"/>
</dbReference>
<dbReference type="Gene3D" id="2.130.10.10">
    <property type="entry name" value="YVTN repeat-like/Quinoprotein amine dehydrogenase"/>
    <property type="match status" value="3"/>
</dbReference>
<dbReference type="InterPro" id="IPR018846">
    <property type="entry name" value="Beta-prop_RSE1/DDB1/CPSF1_1st"/>
</dbReference>
<dbReference type="InterPro" id="IPR004871">
    <property type="entry name" value="Cleavage/polyA-sp_fac_asu_C"/>
</dbReference>
<dbReference type="InterPro" id="IPR050358">
    <property type="entry name" value="RSE1/DDB1/CFT1/CPSF1"/>
</dbReference>
<dbReference type="InterPro" id="IPR015943">
    <property type="entry name" value="WD40/YVTN_repeat-like_dom_sf"/>
</dbReference>
<dbReference type="InterPro" id="IPR036322">
    <property type="entry name" value="WD40_repeat_dom_sf"/>
</dbReference>
<dbReference type="PANTHER" id="PTHR10644">
    <property type="entry name" value="DNA REPAIR/RNA PROCESSING CPSF FAMILY"/>
    <property type="match status" value="1"/>
</dbReference>
<dbReference type="Pfam" id="PF10433">
    <property type="entry name" value="Beta-prop_RSE1_1st"/>
    <property type="match status" value="1"/>
</dbReference>
<dbReference type="Pfam" id="PF23726">
    <property type="entry name" value="Beta-prop_RSE1_2nd"/>
    <property type="match status" value="1"/>
</dbReference>
<dbReference type="Pfam" id="PF03178">
    <property type="entry name" value="CPSF_A"/>
    <property type="match status" value="1"/>
</dbReference>
<dbReference type="SUPFAM" id="SSF50978">
    <property type="entry name" value="WD40 repeat-like"/>
    <property type="match status" value="1"/>
</dbReference>
<evidence type="ECO:0000250" key="1">
    <source>
        <dbReference type="UniProtKB" id="Q15393"/>
    </source>
</evidence>
<evidence type="ECO:0000305" key="2"/>
<name>SF3B3_PONAB</name>
<reference key="1">
    <citation type="submission" date="2004-11" db="EMBL/GenBank/DDBJ databases">
        <authorList>
            <consortium name="The German cDNA consortium"/>
        </authorList>
    </citation>
    <scope>NUCLEOTIDE SEQUENCE [LARGE SCALE MRNA]</scope>
    <source>
        <tissue>Kidney</tissue>
    </source>
</reference>
<keyword id="KW-0507">mRNA processing</keyword>
<keyword id="KW-0508">mRNA splicing</keyword>
<keyword id="KW-0539">Nucleus</keyword>
<keyword id="KW-0597">Phosphoprotein</keyword>
<keyword id="KW-1185">Reference proteome</keyword>
<keyword id="KW-0747">Spliceosome</keyword>
<protein>
    <recommendedName>
        <fullName>Splicing factor 3B subunit 3</fullName>
    </recommendedName>
    <alternativeName>
        <fullName>Pre-mRNA-splicing factor SF3b 130 kDa subunit</fullName>
        <shortName>SF3b130</shortName>
    </alternativeName>
    <alternativeName>
        <fullName>Spliceosome-associated protein 130</fullName>
        <shortName>SAP 130</shortName>
    </alternativeName>
</protein>
<proteinExistence type="evidence at transcript level"/>
<sequence length="1217" mass="135504">MFLYNLTLQRATGISFAIHGNFSGTKQQEIVVSRGKILELLRPDPNTGKVHTLLTVEVFGVIRSLMAFRLTGGTKDYIVVGSDSGRIVILEYQPSKNMFEKIHQETFGKSGCRRIVPGQFLAVDPKGRAVMISAIEKQKLVYILNRDAAARLTISSPLEAHKANTLVYHVVGVDVGFENPMFACLEMDYEEADNDPTGEAAANTQQTLTFYELDLGLNHVVRKYSEPLEEHGNFLITVPGGSDGPSGVLICSENYITYKNFGDQPDIRCPIPRRRNDLDDPERGMIFVCSATHKTKSMFFFLAQTEQGDIFKITLETDEDMVTEIRLKYFDTVPVAAAMCVLKTGFLFVASEFGNHYLYQIAHLGDDDEEPEFSSAMPLEEGDTFFFQPRPLKNLVLVDELDSLSPILFCQIADLANEDTPQLYVACGRGPRSSLRVLRHGLEVSETAVSELPGNPNAVWTVRRHIEDEFDAYIIVSFVNATLVLSIGETVEEVTDSGFLGTTPTLSCSLLGDDALVQVYPDGIRHIRADKRVNEWKTPGKKTIVKCAVNQRQVVIALTGGELVYFEMDPSGQLNEYTERKEMSADVVCMSLANVPPGEQRSRFLAVGLVDNTVRIISLDPSDCLQPLSMQALPAQPESLCIVEMGGTEKQDELGERGSIGFLYLNIGLQNGVLLRTVLDPVTGDLSDTRTRYLGSRPVKLFRVRMQGQEAVLAMSSRSWLSYSYQSRFHLTPLSYETLEFASGFASEQCPEGIVAISTNTLRILALEKLGAVFNQVAFPLQYTPRKFVIHPESNNLIIIETDHNAYTEATKAQRKQQMAEEMVEAAGEDERELAAEMAAAFLNENLPESIFGAPKAGSGQWASVIRVMNPIQGNTLDLVQLEQNEAAFSVAVCRFSNTGEDWYVLVGVAKDLILNPRSVAGGFVYTYKLVNNGEKLEFLHKTPVEEVPAAIAPFQGRVLIGVGKLLRVYDLGKKKLLRKCENKHIANYISGIQTIGHRVIVSDVQESFIWVRYKRNENQLIIFADDTYPRWVTTASLLDYDTVAGADKFGNICVVRLPPNTNDEVDEDPTGNKALRDRGLLNGASQKAEVIMNYHVGETVLSLQKTTLIPGGSESLVYTTLSGGIGILVPFTSHEDHDFFQHVEMHLRSEHPPLCGRDHLSFRSYYFPVKNVIDGDLCEQFNSMEPNKQKNVSEELDRTPPEVTKKLEDIRTRYAF</sequence>
<feature type="chain" id="PRO_0000276756" description="Splicing factor 3B subunit 3">
    <location>
        <begin position="1"/>
        <end position="1217"/>
    </location>
</feature>
<feature type="region of interest" description="Interaction with PHF5A, SF3B1 and SF3B5" evidence="1">
    <location>
        <begin position="105"/>
        <end position="119"/>
    </location>
</feature>
<feature type="region of interest" description="Interaction with PHF5A, SF3B1 and SF3B5" evidence="1">
    <location>
        <begin position="145"/>
        <end position="168"/>
    </location>
</feature>
<feature type="region of interest" description="Interaction with SF3B1 and SF3B5" evidence="1">
    <location>
        <begin position="193"/>
        <end position="231"/>
    </location>
</feature>
<feature type="region of interest" description="Interaction with SF3B1 and SF3B5" evidence="1">
    <location>
        <begin position="786"/>
        <end position="804"/>
    </location>
</feature>
<feature type="region of interest" description="Interaction with SF3B1" evidence="1">
    <location>
        <begin position="1028"/>
        <end position="1049"/>
    </location>
</feature>
<feature type="region of interest" description="Interaction with SF3B5" evidence="1">
    <location>
        <begin position="1100"/>
        <end position="1123"/>
    </location>
</feature>
<feature type="site" description="Interaction with SF3B5" evidence="1">
    <location>
        <position position="284"/>
    </location>
</feature>
<feature type="site" description="Interaction with SF3B5" evidence="1">
    <location>
        <position position="306"/>
    </location>
</feature>
<feature type="site" description="Interaction with SF3B5" evidence="1">
    <location>
        <position position="352"/>
    </location>
</feature>
<feature type="site" description="Interaction with SF3B5" evidence="1">
    <location>
        <position position="429"/>
    </location>
</feature>
<feature type="site" description="Interaction with SF3B5" evidence="1">
    <location>
        <position position="916"/>
    </location>
</feature>
<feature type="site" description="Interaction with SF3B1" evidence="1">
    <location>
        <position position="988"/>
    </location>
</feature>
<feature type="site" description="Interaction with SF3B1" evidence="1">
    <location>
        <position position="1171"/>
    </location>
</feature>
<feature type="modified residue" description="Phosphoserine" evidence="1">
    <location>
        <position position="156"/>
    </location>
</feature>
<feature type="modified residue" description="Phosphothreonine" evidence="1">
    <location>
        <position position="1200"/>
    </location>
</feature>
<gene>
    <name type="primary">SF3B3</name>
</gene>
<comment type="function">
    <text evidence="1">Component of the 17S U2 SnRNP complex of the spliceosome, a large ribonucleoprotein complex that removes introns from transcribed pre-mRNAs. The 17S U2 SnRNP complex (1) directly participates in early spliceosome assembly and (2) mediates recognition of the intron branch site during pre-mRNA splicing by promoting the selection of the pre-mRNA branch-site adenosine, the nucleophile for the first step of splicing. Within the 17S U2 SnRNP complex, SF3B3 is part of the SF3B subcomplex, which is required for 'A' complex assembly formed by the stable binding of U2 snRNP to the branchpoint sequence in pre-mRNA. Sequence independent binding of SF3A and SF3B subcomplexes upstream of the branch site is essential, it may anchor U2 snRNP to the pre-mRNA. May also be involved in the assembly of the 'E' complex. Also acts as a component of the minor spliceosome, which is involved in the splicing of U12-type introns in pre-mRNAs.</text>
</comment>
<comment type="subunit">
    <text evidence="1">Component of the 17S U2 SnRNP complex, a ribonucleoprotein complex that contains small nuclear RNA (snRNA) U2 and a number of specific proteins. Part of the SF3B subcomplex of the 17S U2 SnRNP complex. SF3B associates with the splicing subcomplex SF3A and a 12S RNA unit to form the U2 small nuclear ribonucleoproteins complex (U2 snRNP). Within the SF3B subcomplex, interacts directly with SF3B1 (via HEAT domain), SF3B5 and PHF5A. Identified in the spliceosome A complex; remains associated with the spliceosome throughout the splicing process. Component of the spliceosome B complex. Identified in the spliceosome C complex. Identified in the spliceosome E complex. Component of the minor (U12-type spliceosome) spliceosome. Within this complex, interacts with SCNM1. Associates with the STAGA transcription coactivator-HAT complex. Interacts with SUPT3H. Interacts with TAF3.</text>
</comment>
<comment type="subcellular location">
    <subcellularLocation>
        <location evidence="1">Nucleus</location>
    </subcellularLocation>
</comment>
<comment type="domain">
    <text evidence="1">The core of the protein consists of three beta-propeller domains.</text>
</comment>
<comment type="similarity">
    <text evidence="2">Belongs to the RSE1 family.</text>
</comment>
<accession>Q5RBI5</accession>
<organism>
    <name type="scientific">Pongo abelii</name>
    <name type="common">Sumatran orangutan</name>
    <name type="synonym">Pongo pygmaeus abelii</name>
    <dbReference type="NCBI Taxonomy" id="9601"/>
    <lineage>
        <taxon>Eukaryota</taxon>
        <taxon>Metazoa</taxon>
        <taxon>Chordata</taxon>
        <taxon>Craniata</taxon>
        <taxon>Vertebrata</taxon>
        <taxon>Euteleostomi</taxon>
        <taxon>Mammalia</taxon>
        <taxon>Eutheria</taxon>
        <taxon>Euarchontoglires</taxon>
        <taxon>Primates</taxon>
        <taxon>Haplorrhini</taxon>
        <taxon>Catarrhini</taxon>
        <taxon>Hominidae</taxon>
        <taxon>Pongo</taxon>
    </lineage>
</organism>